<organism>
    <name type="scientific">Oryza sativa subsp. japonica</name>
    <name type="common">Rice</name>
    <dbReference type="NCBI Taxonomy" id="39947"/>
    <lineage>
        <taxon>Eukaryota</taxon>
        <taxon>Viridiplantae</taxon>
        <taxon>Streptophyta</taxon>
        <taxon>Embryophyta</taxon>
        <taxon>Tracheophyta</taxon>
        <taxon>Spermatophyta</taxon>
        <taxon>Magnoliopsida</taxon>
        <taxon>Liliopsida</taxon>
        <taxon>Poales</taxon>
        <taxon>Poaceae</taxon>
        <taxon>BOP clade</taxon>
        <taxon>Oryzoideae</taxon>
        <taxon>Oryzeae</taxon>
        <taxon>Oryzinae</taxon>
        <taxon>Oryza</taxon>
        <taxon>Oryza sativa</taxon>
    </lineage>
</organism>
<evidence type="ECO:0000250" key="1"/>
<evidence type="ECO:0000255" key="2"/>
<evidence type="ECO:0000256" key="3">
    <source>
        <dbReference type="SAM" id="MobiDB-lite"/>
    </source>
</evidence>
<evidence type="ECO:0000269" key="4">
    <source>
    </source>
</evidence>
<evidence type="ECO:0000269" key="5">
    <source>
    </source>
</evidence>
<evidence type="ECO:0000269" key="6">
    <source>
    </source>
</evidence>
<evidence type="ECO:0000269" key="7">
    <source>
    </source>
</evidence>
<evidence type="ECO:0000269" key="8">
    <source>
    </source>
</evidence>
<evidence type="ECO:0000269" key="9">
    <source>
    </source>
</evidence>
<evidence type="ECO:0000269" key="10">
    <source>
    </source>
</evidence>
<evidence type="ECO:0000305" key="11"/>
<evidence type="ECO:0000305" key="12">
    <source>
    </source>
</evidence>
<reference key="1">
    <citation type="journal article" date="2002" name="Nature">
        <title>The genome sequence and structure of rice chromosome 1.</title>
        <authorList>
            <person name="Sasaki T."/>
            <person name="Matsumoto T."/>
            <person name="Yamamoto K."/>
            <person name="Sakata K."/>
            <person name="Baba T."/>
            <person name="Katayose Y."/>
            <person name="Wu J."/>
            <person name="Niimura Y."/>
            <person name="Cheng Z."/>
            <person name="Nagamura Y."/>
            <person name="Antonio B.A."/>
            <person name="Kanamori H."/>
            <person name="Hosokawa S."/>
            <person name="Masukawa M."/>
            <person name="Arikawa K."/>
            <person name="Chiden Y."/>
            <person name="Hayashi M."/>
            <person name="Okamoto M."/>
            <person name="Ando T."/>
            <person name="Aoki H."/>
            <person name="Arita K."/>
            <person name="Hamada M."/>
            <person name="Harada C."/>
            <person name="Hijishita S."/>
            <person name="Honda M."/>
            <person name="Ichikawa Y."/>
            <person name="Idonuma A."/>
            <person name="Iijima M."/>
            <person name="Ikeda M."/>
            <person name="Ikeno M."/>
            <person name="Ito S."/>
            <person name="Ito T."/>
            <person name="Ito Y."/>
            <person name="Ito Y."/>
            <person name="Iwabuchi A."/>
            <person name="Kamiya K."/>
            <person name="Karasawa W."/>
            <person name="Katagiri S."/>
            <person name="Kikuta A."/>
            <person name="Kobayashi N."/>
            <person name="Kono I."/>
            <person name="Machita K."/>
            <person name="Maehara T."/>
            <person name="Mizuno H."/>
            <person name="Mizubayashi T."/>
            <person name="Mukai Y."/>
            <person name="Nagasaki H."/>
            <person name="Nakashima M."/>
            <person name="Nakama Y."/>
            <person name="Nakamichi Y."/>
            <person name="Nakamura M."/>
            <person name="Namiki N."/>
            <person name="Negishi M."/>
            <person name="Ohta I."/>
            <person name="Ono N."/>
            <person name="Saji S."/>
            <person name="Sakai K."/>
            <person name="Shibata M."/>
            <person name="Shimokawa T."/>
            <person name="Shomura A."/>
            <person name="Song J."/>
            <person name="Takazaki Y."/>
            <person name="Terasawa K."/>
            <person name="Tsuji K."/>
            <person name="Waki K."/>
            <person name="Yamagata H."/>
            <person name="Yamane H."/>
            <person name="Yoshiki S."/>
            <person name="Yoshihara R."/>
            <person name="Yukawa K."/>
            <person name="Zhong H."/>
            <person name="Iwama H."/>
            <person name="Endo T."/>
            <person name="Ito H."/>
            <person name="Hahn J.H."/>
            <person name="Kim H.-I."/>
            <person name="Eun M.-Y."/>
            <person name="Yano M."/>
            <person name="Jiang J."/>
            <person name="Gojobori T."/>
        </authorList>
    </citation>
    <scope>NUCLEOTIDE SEQUENCE [LARGE SCALE GENOMIC DNA]</scope>
    <source>
        <strain>cv. Nipponbare</strain>
    </source>
</reference>
<reference key="2">
    <citation type="journal article" date="2005" name="Nature">
        <title>The map-based sequence of the rice genome.</title>
        <authorList>
            <consortium name="International rice genome sequencing project (IRGSP)"/>
        </authorList>
    </citation>
    <scope>NUCLEOTIDE SEQUENCE [LARGE SCALE GENOMIC DNA]</scope>
    <source>
        <strain>cv. Nipponbare</strain>
    </source>
</reference>
<reference key="3">
    <citation type="journal article" date="2008" name="Nucleic Acids Res.">
        <title>The rice annotation project database (RAP-DB): 2008 update.</title>
        <authorList>
            <consortium name="The rice annotation project (RAP)"/>
        </authorList>
    </citation>
    <scope>GENOME REANNOTATION</scope>
    <source>
        <strain>cv. Nipponbare</strain>
    </source>
</reference>
<reference key="4">
    <citation type="journal article" date="2013" name="Rice">
        <title>Improvement of the Oryza sativa Nipponbare reference genome using next generation sequence and optical map data.</title>
        <authorList>
            <person name="Kawahara Y."/>
            <person name="de la Bastide M."/>
            <person name="Hamilton J.P."/>
            <person name="Kanamori H."/>
            <person name="McCombie W.R."/>
            <person name="Ouyang S."/>
            <person name="Schwartz D.C."/>
            <person name="Tanaka T."/>
            <person name="Wu J."/>
            <person name="Zhou S."/>
            <person name="Childs K.L."/>
            <person name="Davidson R.M."/>
            <person name="Lin H."/>
            <person name="Quesada-Ocampo L."/>
            <person name="Vaillancourt B."/>
            <person name="Sakai H."/>
            <person name="Lee S.S."/>
            <person name="Kim J."/>
            <person name="Numa H."/>
            <person name="Itoh T."/>
            <person name="Buell C.R."/>
            <person name="Matsumoto T."/>
        </authorList>
    </citation>
    <scope>GENOME REANNOTATION</scope>
    <source>
        <strain>cv. Nipponbare</strain>
    </source>
</reference>
<reference key="5">
    <citation type="journal article" date="2005" name="Plant Cell Physiol.">
        <title>Suppression of tiller bud activity in tillering dwarf mutants of rice.</title>
        <authorList>
            <person name="Ishikawa S."/>
            <person name="Maekawa M."/>
            <person name="Arite T."/>
            <person name="Onishi K."/>
            <person name="Takamure I."/>
            <person name="Kyozuka J."/>
        </authorList>
    </citation>
    <scope>DISRUPTION PHENOTYPE</scope>
    <source>
        <strain>cv. Shiokari</strain>
    </source>
</reference>
<reference key="6">
    <citation type="journal article" date="2007" name="Plant J.">
        <title>DWARF10, an RMS1/MAX4/DAD1 ortholog, controls lateral bud outgrowth in rice.</title>
        <authorList>
            <person name="Arite T."/>
            <person name="Iwata H."/>
            <person name="Ohshima K."/>
            <person name="Maekawa M."/>
            <person name="Nakajima M."/>
            <person name="Kojima M."/>
            <person name="Sakakibara H."/>
            <person name="Kyozuka J."/>
        </authorList>
    </citation>
    <scope>FUNCTION</scope>
    <scope>SUBCELLULAR LOCATION</scope>
    <scope>TISSUE SPECIFICITY</scope>
    <scope>INDUCTION BY AUXIN</scope>
    <scope>MUTAGENESIS OF LEU-112</scope>
    <scope>DISRUPTION PHENOTYPE</scope>
</reference>
<reference key="7">
    <citation type="journal article" date="2008" name="Biochem. J.">
        <title>Carotenoid oxygenases involved in plant branching catalyse a highly specific conserved apocarotenoid cleavage reaction.</title>
        <authorList>
            <person name="Alder A."/>
            <person name="Holdermann I."/>
            <person name="Beyer P."/>
            <person name="Al-Babili S."/>
        </authorList>
    </citation>
    <scope>CATALYTIC ACTIVITY</scope>
</reference>
<reference key="8">
    <citation type="journal article" date="2008" name="Nature">
        <title>Inhibition of shoot branching by new terpenoid plant hormones.</title>
        <authorList>
            <person name="Umehara M."/>
            <person name="Hanada A."/>
            <person name="Yoshida S."/>
            <person name="Akiyama K."/>
            <person name="Arite T."/>
            <person name="Takeda-Kamiya N."/>
            <person name="Magome H."/>
            <person name="Kamiya Y."/>
            <person name="Shirasu K."/>
            <person name="Yoneyama K."/>
            <person name="Kyozuka J."/>
            <person name="Yamaguchi S."/>
        </authorList>
    </citation>
    <scope>FUNCTION</scope>
    <scope>DISRUPTION PHENOTYPE</scope>
    <source>
        <strain>cv. Shiokari</strain>
    </source>
</reference>
<reference key="9">
    <citation type="journal article" date="2009" name="Plant Cell">
        <title>DWARF27, an iron-containing protein required for the biosynthesis of strigolactones, regulates rice tiller bud outgrowth.</title>
        <authorList>
            <person name="Lin H."/>
            <person name="Wang R."/>
            <person name="Qian Q."/>
            <person name="Yan M."/>
            <person name="Meng X."/>
            <person name="Fu Z."/>
            <person name="Yan C."/>
            <person name="Jiang B."/>
            <person name="Su Z."/>
            <person name="Li J."/>
            <person name="Wang Y."/>
        </authorList>
    </citation>
    <scope>DISRUPTION PHENOTYPE</scope>
    <source>
        <strain>cv. Shiokari</strain>
    </source>
</reference>
<reference key="10">
    <citation type="journal article" date="2012" name="Science">
        <title>The path from beta-carotene to carlactone, a strigolactone-like plant hormone.</title>
        <authorList>
            <person name="Alder A."/>
            <person name="Jamil M."/>
            <person name="Marzorati M."/>
            <person name="Bruno M."/>
            <person name="Vermathen M."/>
            <person name="Bigler P."/>
            <person name="Ghisla S."/>
            <person name="Bouwmeester H."/>
            <person name="Beyer P."/>
            <person name="Al-Babili S."/>
        </authorList>
    </citation>
    <scope>CATALYTIC ACTIVITY</scope>
</reference>
<reference key="11">
    <citation type="journal article" date="2013" name="Mol. Plant">
        <title>Selective mimics of strigolactone actions and their potential use for controlling damage caused by root parasitic weeds.</title>
        <authorList>
            <person name="Fukui K."/>
            <person name="Ito S."/>
            <person name="Asami T."/>
        </authorList>
    </citation>
    <scope>DISRUPTION PHENOTYPE</scope>
</reference>
<protein>
    <recommendedName>
        <fullName>Carotenoid cleavage dioxygenase 8 homolog B, chloroplastic</fullName>
        <shortName>OsCCD8b</shortName>
        <ecNumber evidence="9">1.13.11.69</ecNumber>
        <ecNumber evidence="6">1.13.11.70</ecNumber>
    </recommendedName>
    <alternativeName>
        <fullName>Protein DWARF-10</fullName>
    </alternativeName>
    <alternativeName>
        <fullName>Protein MAX4 homolog</fullName>
    </alternativeName>
</protein>
<proteinExistence type="evidence at protein level"/>
<accession>Q8LIY8</accession>
<accession>A0A0P0V860</accession>
<accession>Q0JJD5</accession>
<dbReference type="EC" id="1.13.11.69" evidence="9"/>
<dbReference type="EC" id="1.13.11.70" evidence="6"/>
<dbReference type="EMBL" id="AP003376">
    <property type="protein sequence ID" value="BAC05598.1"/>
    <property type="molecule type" value="Genomic_DNA"/>
</dbReference>
<dbReference type="EMBL" id="AP008207">
    <property type="protein sequence ID" value="BAF06143.2"/>
    <property type="molecule type" value="Genomic_DNA"/>
</dbReference>
<dbReference type="EMBL" id="AP014957">
    <property type="protein sequence ID" value="BAS74320.1"/>
    <property type="molecule type" value="Genomic_DNA"/>
</dbReference>
<dbReference type="RefSeq" id="XP_015642760.1">
    <property type="nucleotide sequence ID" value="XM_015787274.1"/>
</dbReference>
<dbReference type="SMR" id="Q8LIY8"/>
<dbReference type="FunCoup" id="Q8LIY8">
    <property type="interactions" value="300"/>
</dbReference>
<dbReference type="STRING" id="39947.Q8LIY8"/>
<dbReference type="PaxDb" id="39947-Q8LIY8"/>
<dbReference type="EnsemblPlants" id="Os01t0746400-01">
    <property type="protein sequence ID" value="Os01t0746400-01"/>
    <property type="gene ID" value="Os01g0746400"/>
</dbReference>
<dbReference type="Gramene" id="Os01t0746400-01">
    <property type="protein sequence ID" value="Os01t0746400-01"/>
    <property type="gene ID" value="Os01g0746400"/>
</dbReference>
<dbReference type="KEGG" id="dosa:Os01g0746400"/>
<dbReference type="eggNOG" id="KOG1285">
    <property type="taxonomic scope" value="Eukaryota"/>
</dbReference>
<dbReference type="HOGENOM" id="CLU_016472_1_2_1"/>
<dbReference type="InParanoid" id="Q8LIY8"/>
<dbReference type="OMA" id="WHIGDYN"/>
<dbReference type="OrthoDB" id="407010at2759"/>
<dbReference type="PlantReactome" id="R-OSA-5367729">
    <property type="pathway name" value="Strigolactone biosynthesis"/>
</dbReference>
<dbReference type="Proteomes" id="UP000000763">
    <property type="component" value="Chromosome 1"/>
</dbReference>
<dbReference type="Proteomes" id="UP000059680">
    <property type="component" value="Chromosome 1"/>
</dbReference>
<dbReference type="GO" id="GO:0009507">
    <property type="term" value="C:chloroplast"/>
    <property type="evidence" value="ECO:0000314"/>
    <property type="project" value="UniProtKB"/>
</dbReference>
<dbReference type="GO" id="GO:0102396">
    <property type="term" value="F:9-cis-10'-apo-beta-carotenal cleavage oxygenase activity"/>
    <property type="evidence" value="ECO:0007669"/>
    <property type="project" value="UniProtKB-EC"/>
</dbReference>
<dbReference type="GO" id="GO:0102251">
    <property type="term" value="F:all-trans-beta-apo-10'-carotenal cleavage oxygenase activity"/>
    <property type="evidence" value="ECO:0007669"/>
    <property type="project" value="UniProtKB-EC"/>
</dbReference>
<dbReference type="GO" id="GO:0010436">
    <property type="term" value="F:carotenoid dioxygenase activity"/>
    <property type="evidence" value="ECO:0000318"/>
    <property type="project" value="GO_Central"/>
</dbReference>
<dbReference type="GO" id="GO:0046872">
    <property type="term" value="F:metal ion binding"/>
    <property type="evidence" value="ECO:0007669"/>
    <property type="project" value="UniProtKB-KW"/>
</dbReference>
<dbReference type="GO" id="GO:0016702">
    <property type="term" value="F:oxidoreductase activity, acting on single donors with incorporation of molecular oxygen, incorporation of two atoms of oxygen"/>
    <property type="evidence" value="ECO:0000314"/>
    <property type="project" value="UniProtKB"/>
</dbReference>
<dbReference type="GO" id="GO:0016121">
    <property type="term" value="P:carotene catabolic process"/>
    <property type="evidence" value="ECO:0000314"/>
    <property type="project" value="UniProtKB"/>
</dbReference>
<dbReference type="GO" id="GO:0010223">
    <property type="term" value="P:secondary shoot formation"/>
    <property type="evidence" value="ECO:0000315"/>
    <property type="project" value="UniProtKB"/>
</dbReference>
<dbReference type="GO" id="GO:1901601">
    <property type="term" value="P:strigolactone biosynthetic process"/>
    <property type="evidence" value="ECO:0000315"/>
    <property type="project" value="UniProtKB"/>
</dbReference>
<dbReference type="InterPro" id="IPR004294">
    <property type="entry name" value="Carotenoid_Oase"/>
</dbReference>
<dbReference type="PANTHER" id="PTHR10543">
    <property type="entry name" value="BETA-CAROTENE DIOXYGENASE"/>
    <property type="match status" value="1"/>
</dbReference>
<dbReference type="PANTHER" id="PTHR10543:SF24">
    <property type="entry name" value="CAROTENOID ISOMEROOXYGENASE"/>
    <property type="match status" value="1"/>
</dbReference>
<dbReference type="Pfam" id="PF03055">
    <property type="entry name" value="RPE65"/>
    <property type="match status" value="1"/>
</dbReference>
<sequence>MSPAMLQASSLCVSAALSGAASRPGRLASQGHQGKRAVAQPLAASAVTEAAPPAPVVAPPARPVDAPRRRGGRGGGGGGGELVAWKSVRQERWEGALEVDGELPLWLDGTYLRNGPGLWNLGDYGFRHLFDGYATLVRVSFRGGRAVGAHRQIESEAYKAARAHGKVCYREFSEVPKPDNFLSYVGQLATLFSGSSLTDNSNTGVVMLGDGRVLCLTETIKGSIQVDPDTLDTVGKFQYTDKLGGLIHSAHPIVTDTEFWTLIPDLIRPGYVVARMDAGSNERQFVGRVDCRGGPAPGWVHSFPVTEHYVVVPEMPLRYCAKNLLRAEPTPLYKFEWHLESGSYMHVMCKASGKIVASVEVPPFVTFHFINAYEETDEEGRVTAIIADCCEHNANTAILDKLRLHNLRSSSGQDVLPDARVGRFRIPLDGSQFGELETALDPEEHGRGMDMCSINPAHVGREYRYAYACGARRPCNFPNTLTKVDLVERTAKNWHEEGSVPSEPFFVPRPGATEEDDGVAISMVSAKDGSGYALVLDGKTFEEVARAKFPYGLPYGLHCCWVPRKRNSK</sequence>
<gene>
    <name type="primary">CCD8B</name>
    <name type="synonym">D10</name>
    <name type="ordered locus">Os01g0746400</name>
    <name type="ordered locus">LOC_Os01g54270</name>
    <name type="ORF">OSJNBa0014K08.38</name>
</gene>
<name>CCD8B_ORYSJ</name>
<keyword id="KW-0150">Chloroplast</keyword>
<keyword id="KW-0223">Dioxygenase</keyword>
<keyword id="KW-0408">Iron</keyword>
<keyword id="KW-0479">Metal-binding</keyword>
<keyword id="KW-0560">Oxidoreductase</keyword>
<keyword id="KW-0934">Plastid</keyword>
<keyword id="KW-1185">Reference proteome</keyword>
<keyword id="KW-0809">Transit peptide</keyword>
<comment type="function">
    <text evidence="5 7">Involved in strigolactones biosynthesis by cleaving the C(27) 9-cis-10'-apo-beta-carotenal produced by CCD7. Produces the C(19) carlactone and a C(8) hydroxyaldehyde. Also shows lower activity with all-trans-10'-apo-beta-carotenal producing a C(9) dialdehyde and the C(18) 13-apo-beta-carotenone. Strigolactones are hormones that inhibit tillering and shoot branching through the MAX-dependent pathway, contribute to the regulation of shoot architectural response to phosphate-limiting conditions and function as rhizosphere signal that stimulates hyphal branching of arbuscular mycorrhizal fungi and trigger seed germination of root parasitic weeds.</text>
</comment>
<comment type="catalytic activity">
    <reaction evidence="9">
        <text>9-cis-10'-apo-beta-carotenal + 2 O2 = (2E,4E,6E)-7-hydroxy-4-methylhepta-2,4,6-trienal + (11R)-carlactone</text>
        <dbReference type="Rhea" id="RHEA:34403"/>
        <dbReference type="ChEBI" id="CHEBI:15379"/>
        <dbReference type="ChEBI" id="CHEBI:67191"/>
        <dbReference type="ChEBI" id="CHEBI:67192"/>
        <dbReference type="ChEBI" id="CHEBI:194508"/>
        <dbReference type="EC" id="1.13.11.69"/>
    </reaction>
</comment>
<comment type="catalytic activity">
    <reaction evidence="6">
        <text>all-trans-10'-apo-beta-carotenal + O2 = (2E,4E,6E)-4-methylocta-2,4,6-trienedial + 13-apo-beta-carotenone</text>
        <dbReference type="Rhea" id="RHEA:26401"/>
        <dbReference type="ChEBI" id="CHEBI:15379"/>
        <dbReference type="ChEBI" id="CHEBI:53153"/>
        <dbReference type="ChEBI" id="CHEBI:53175"/>
        <dbReference type="ChEBI" id="CHEBI:53176"/>
        <dbReference type="EC" id="1.13.11.70"/>
    </reaction>
</comment>
<comment type="cofactor">
    <cofactor evidence="1">
        <name>Fe(2+)</name>
        <dbReference type="ChEBI" id="CHEBI:29033"/>
    </cofactor>
    <text evidence="1">Binds 1 Fe(2+) ion per subunit.</text>
</comment>
<comment type="subcellular location">
    <subcellularLocation>
        <location evidence="5">Plastid</location>
        <location evidence="5">Chloroplast</location>
    </subcellularLocation>
</comment>
<comment type="tissue specificity">
    <text evidence="5">Expressed in parenchyma cells of the root stele, shoot apex, leaf buds, xylem parenchyma cells of the stem, inflorescences and panicles.</text>
</comment>
<comment type="induction">
    <text evidence="5">By auxin.</text>
</comment>
<comment type="disruption phenotype">
    <text evidence="4 5 7 8 10">Dwarf phenotype with increased branching and tiller number, and strong reduction of the root levels of strigolactones.</text>
</comment>
<comment type="miscellaneous">
    <text evidence="12">The branching phenotypes of the ccd7/max3 and ccd8b/max4 mutants can be rescued by exogenous treatment with the synthetic strigolactone analogs GR24 and 4BD.</text>
</comment>
<comment type="similarity">
    <text evidence="11">Belongs to the carotenoid oxygenase family.</text>
</comment>
<feature type="transit peptide" description="Chloroplast" evidence="2">
    <location>
        <begin position="1"/>
        <end position="43"/>
    </location>
</feature>
<feature type="chain" id="PRO_0000422061" description="Carotenoid cleavage dioxygenase 8 homolog B, chloroplastic">
    <location>
        <begin position="44"/>
        <end position="569"/>
    </location>
</feature>
<feature type="region of interest" description="Disordered" evidence="3">
    <location>
        <begin position="23"/>
        <end position="81"/>
    </location>
</feature>
<feature type="compositionally biased region" description="Pro residues" evidence="3">
    <location>
        <begin position="52"/>
        <end position="62"/>
    </location>
</feature>
<feature type="binding site" evidence="1">
    <location>
        <position position="251"/>
    </location>
    <ligand>
        <name>Fe cation</name>
        <dbReference type="ChEBI" id="CHEBI:24875"/>
        <note>catalytic</note>
    </ligand>
</feature>
<feature type="binding site" evidence="1">
    <location>
        <position position="301"/>
    </location>
    <ligand>
        <name>Fe cation</name>
        <dbReference type="ChEBI" id="CHEBI:24875"/>
        <note>catalytic</note>
    </ligand>
</feature>
<feature type="binding site" evidence="1">
    <location>
        <position position="368"/>
    </location>
    <ligand>
        <name>Fe cation</name>
        <dbReference type="ChEBI" id="CHEBI:24875"/>
        <note>catalytic</note>
    </ligand>
</feature>
<feature type="binding site" evidence="1">
    <location>
        <position position="558"/>
    </location>
    <ligand>
        <name>Fe cation</name>
        <dbReference type="ChEBI" id="CHEBI:24875"/>
        <note>catalytic</note>
    </ligand>
</feature>
<feature type="mutagenesis site" description="In d10-1; dwarf and high tillering phenotypes." evidence="5">
    <original>L</original>
    <variation>P</variation>
    <location>
        <position position="112"/>
    </location>
</feature>